<gene>
    <name type="primary">FGA</name>
</gene>
<feature type="peptide" id="PRO_0000009023" description="Fibrinopeptide A">
    <location>
        <begin position="1"/>
        <end position="16"/>
    </location>
</feature>
<feature type="non-terminal residue">
    <location>
        <position position="16"/>
    </location>
</feature>
<proteinExistence type="evidence at protein level"/>
<accession>P14453</accession>
<dbReference type="GO" id="GO:0005576">
    <property type="term" value="C:extracellular region"/>
    <property type="evidence" value="ECO:0007669"/>
    <property type="project" value="UniProtKB-SubCell"/>
</dbReference>
<dbReference type="GO" id="GO:0002250">
    <property type="term" value="P:adaptive immune response"/>
    <property type="evidence" value="ECO:0007669"/>
    <property type="project" value="UniProtKB-KW"/>
</dbReference>
<dbReference type="GO" id="GO:0007596">
    <property type="term" value="P:blood coagulation"/>
    <property type="evidence" value="ECO:0007669"/>
    <property type="project" value="UniProtKB-KW"/>
</dbReference>
<dbReference type="GO" id="GO:0045087">
    <property type="term" value="P:innate immune response"/>
    <property type="evidence" value="ECO:0007669"/>
    <property type="project" value="UniProtKB-KW"/>
</dbReference>
<protein>
    <recommendedName>
        <fullName>Fibrinogen alpha chain</fullName>
    </recommendedName>
    <component>
        <recommendedName>
            <fullName>Fibrinopeptide A</fullName>
        </recommendedName>
    </component>
</protein>
<reference key="1">
    <citation type="journal article" date="1970" name="Science">
        <title>Gibbon fibrinopeptides: identification of a glycine-serine allelism at position B-3.</title>
        <authorList>
            <person name="Mross G.A."/>
            <person name="Doolittle R.F."/>
            <person name="Roberts B.F."/>
        </authorList>
    </citation>
    <scope>PROTEIN SEQUENCE</scope>
</reference>
<organism>
    <name type="scientific">Hylobates lar</name>
    <name type="common">Lar gibbon</name>
    <name type="synonym">White-handed gibbon</name>
    <dbReference type="NCBI Taxonomy" id="9580"/>
    <lineage>
        <taxon>Eukaryota</taxon>
        <taxon>Metazoa</taxon>
        <taxon>Chordata</taxon>
        <taxon>Craniata</taxon>
        <taxon>Vertebrata</taxon>
        <taxon>Euteleostomi</taxon>
        <taxon>Mammalia</taxon>
        <taxon>Eutheria</taxon>
        <taxon>Euarchontoglires</taxon>
        <taxon>Primates</taxon>
        <taxon>Haplorrhini</taxon>
        <taxon>Catarrhini</taxon>
        <taxon>Hylobatidae</taxon>
        <taxon>Hylobates</taxon>
    </lineage>
</organism>
<name>FIBA_HYLLA</name>
<comment type="function">
    <text evidence="1">Cleaved by the protease thrombin to yield monomers which, together with fibrinogen beta (FGB) and fibrinogen gamma (FGG), polymerize to form an insoluble fibrin matrix. Fibrin has a major function in hemostasis as one of the primary components of blood clots. In addition, functions during the early stages of wound repair to stabilize the lesion and guide cell migration during re-epithelialization. Was originally thought to be essential for platelet aggregation, based on in vitro studies using anticoagulated blood. However, subsequent studies have shown that it is not absolutely required for thrombus formation in vivo. Enhances expression of SELP in activated platelets via an ITGB3-dependent pathway. Maternal fibrinogen is essential for successful pregnancy. Fibrin deposition is also associated with infection, where it protects against IFNG-mediated hemorrhage. May also facilitate the immune response via both innate and T-cell mediated pathways.</text>
</comment>
<comment type="subunit">
    <text evidence="2">Heterohexamer; disulfide linked. Contains 2 sets of 3 non-identical chains (alpha, beta and gamma). The 2 heterotrimers are in head to head conformation with the N-termini in a small central domain (By similarity).</text>
</comment>
<comment type="subcellular location">
    <subcellularLocation>
        <location>Secreted</location>
    </subcellularLocation>
</comment>
<comment type="domain">
    <text evidence="2">A long coiled coil structure formed by 3 polypeptide chains connects the central nodule to the C-terminal domains (distal nodules). The long C-terminal ends of the alpha chains fold back, contributing a fourth strand to the coiled coil structure.</text>
</comment>
<comment type="PTM">
    <text>Conversion of fibrinogen to fibrin is triggered by thrombin, which cleaves fibrinopeptides A and B from alpha and beta chains, and thus exposes the N-terminal polymerization sites responsible for the formation of the soft clot. The soft clot is converted into the hard clot by factor XIIIA which catalyzes the epsilon-(gamma-glutamyl)lysine cross-linking between gamma chains (stronger) and between alpha chains (weaker) of different monomers.</text>
</comment>
<comment type="PTM">
    <text>Forms F13A-mediated cross-links between a glutamine and the epsilon-amino group of a lysine residue, forming fibronectin-fibrinogen heteropolymers.</text>
</comment>
<evidence type="ECO:0000250" key="1">
    <source>
        <dbReference type="UniProtKB" id="E9PV24"/>
    </source>
</evidence>
<evidence type="ECO:0000250" key="2">
    <source>
        <dbReference type="UniProtKB" id="P02671"/>
    </source>
</evidence>
<keyword id="KW-1064">Adaptive immunity</keyword>
<keyword id="KW-0094">Blood coagulation</keyword>
<keyword id="KW-0175">Coiled coil</keyword>
<keyword id="KW-0903">Direct protein sequencing</keyword>
<keyword id="KW-1015">Disulfide bond</keyword>
<keyword id="KW-0356">Hemostasis</keyword>
<keyword id="KW-0391">Immunity</keyword>
<keyword id="KW-0399">Innate immunity</keyword>
<keyword id="KW-0964">Secreted</keyword>
<sequence>ADTGEGEFLAEGGGVR</sequence>